<gene>
    <name evidence="1" type="primary">rpoB</name>
    <name type="ordered locus">ACIAD0307</name>
</gene>
<name>RPOB_ACIAD</name>
<comment type="function">
    <text evidence="1">DNA-dependent RNA polymerase catalyzes the transcription of DNA into RNA using the four ribonucleoside triphosphates as substrates.</text>
</comment>
<comment type="catalytic activity">
    <reaction evidence="1">
        <text>RNA(n) + a ribonucleoside 5'-triphosphate = RNA(n+1) + diphosphate</text>
        <dbReference type="Rhea" id="RHEA:21248"/>
        <dbReference type="Rhea" id="RHEA-COMP:14527"/>
        <dbReference type="Rhea" id="RHEA-COMP:17342"/>
        <dbReference type="ChEBI" id="CHEBI:33019"/>
        <dbReference type="ChEBI" id="CHEBI:61557"/>
        <dbReference type="ChEBI" id="CHEBI:140395"/>
        <dbReference type="EC" id="2.7.7.6"/>
    </reaction>
</comment>
<comment type="subunit">
    <text evidence="1">The RNAP catalytic core consists of 2 alpha, 1 beta, 1 beta' and 1 omega subunit. When a sigma factor is associated with the core the holoenzyme is formed, which can initiate transcription.</text>
</comment>
<comment type="similarity">
    <text evidence="1">Belongs to the RNA polymerase beta chain family.</text>
</comment>
<sequence>MAYSYTEKKRIRKNFGKLPSVMDAPYLLSIQVDSYRTFLQDGKSPKNREDIGLQAAFRSVFPIESYSGNAALEFVEYGLGKPEFDVRECILRGSTYAAPMRVKIRLIIKDRETKSIKDVREQEVYMGEIPLMTENGTFVINGTERVIVSQLHRSPGVFFDHDKGKTHSSGKVLYSARIIPYRGSWLDFEFDAKDLVYVRIDRRRKLLASVILRALGYNNAQILDLFYEKVPVYLDFGSYQIDLVPERLRGEMAQFDIADNDGKVIVEQGKRINARHVRQMEASGLTKLSVPDEYLYERITAEDITLRDGDVIAANTLLSHEIMVKLAEGGVKQFNILYTNDIDHGSFVADTLRADTTMGREDALVEIYKVMRPGEPPTKEAAENLFNNLFFSSERYDLSPVGRMKFNRRLGRPYEVGTDQKSREVEGILSNEDIIDVLRTLVEIRNGKGEVDDIDHLGNRRVRSVGEMTENQFRVGLVRVERAVKERLSQAETDNLSPQDLINAKPVAAAIKEFFGSSQLSQFMDQNNPLSEITHKRRVSALGPGGLTRERAGFEVRDVHQTHYGRVCPIETPEGPNIGLINSLSVYAKANDFGFLETPYRKVVDGRVSDDVEYLSAIEEVGTVIAQADSAVDADGHLMEEMVSVRHQGEFVRMPPEKVTHMDVSAQQVVSVAASLIPFLEHDDANRALMGSNMQRQAVPTLLADKPLVGTGMEANVARDSGVCVIAKRGGMIEFVDASRVVIRVNEEEMIAGEAGVDIYNLIKYTRSNQNTCINQKVLVNLGDKVGRGDVLADGPSTDGGELALGQNMRVAFMTWNGYNYEDSILLSERVLQEDRLTSIHIQELSCVARDTKLGAEEITADIPNVGEAALSKLDESGIVYIGAEVTAGDILVGKVTPKGETQLTPEEKLLRAIFGEKAADVKDSSLRVPSGTKGTVIDVQVFTRDGLEKDDRALAIEKAQLDAYRKDLKEEYKIFEEAARERIVRLLNGQESNGGGTTKRGDKLSDDVLSGLELVDLLDIQPTDEGIAERLSQIQVFLKEKSAEIDEKFAEKKRKLATGDELTTGVLKVVKVYLAVKRRIQPGDKMAGRHGNKGVVSNILPVEDMPHDANGVPVDVVLNPLGVPSRMNVGQILETHLGLAAKGLGEQIDKMLQQQRTIAELRIFLDKIYNKVGGEQEELDTLTDEEILVLAGNLRKGVPLATPVFDGAEEGQIKELLELAELPRTGQQILFDGRTGEQFDRPVTVGYMYMLKLNHLVDDKMHARSTGSYSLVTQQPLGGKAQFGGQRFGEMEVWALEAYGAAYTLQEMLTVKSDDVEGRTRIYKNIVDGNHYMDPGMPESFNVLTKEIRSLGINIELKNGD</sequence>
<protein>
    <recommendedName>
        <fullName evidence="1">DNA-directed RNA polymerase subunit beta</fullName>
        <shortName evidence="1">RNAP subunit beta</shortName>
        <ecNumber evidence="1">2.7.7.6</ecNumber>
    </recommendedName>
    <alternativeName>
        <fullName evidence="1">RNA polymerase subunit beta</fullName>
    </alternativeName>
    <alternativeName>
        <fullName evidence="1">Transcriptase subunit beta</fullName>
    </alternativeName>
</protein>
<evidence type="ECO:0000255" key="1">
    <source>
        <dbReference type="HAMAP-Rule" id="MF_01321"/>
    </source>
</evidence>
<proteinExistence type="inferred from homology"/>
<dbReference type="EC" id="2.7.7.6" evidence="1"/>
<dbReference type="EMBL" id="CR543861">
    <property type="protein sequence ID" value="CAG67267.1"/>
    <property type="molecule type" value="Genomic_DNA"/>
</dbReference>
<dbReference type="RefSeq" id="WP_011182019.1">
    <property type="nucleotide sequence ID" value="NC_005966.1"/>
</dbReference>
<dbReference type="SMR" id="Q6FF90"/>
<dbReference type="STRING" id="202950.GCA_001485005_00581"/>
<dbReference type="GeneID" id="45232821"/>
<dbReference type="KEGG" id="aci:ACIAD0307"/>
<dbReference type="eggNOG" id="COG0085">
    <property type="taxonomic scope" value="Bacteria"/>
</dbReference>
<dbReference type="HOGENOM" id="CLU_000524_4_0_6"/>
<dbReference type="OrthoDB" id="9803954at2"/>
<dbReference type="BioCyc" id="ASP62977:ACIAD_RS01460-MONOMER"/>
<dbReference type="Proteomes" id="UP000000430">
    <property type="component" value="Chromosome"/>
</dbReference>
<dbReference type="GO" id="GO:0000428">
    <property type="term" value="C:DNA-directed RNA polymerase complex"/>
    <property type="evidence" value="ECO:0007669"/>
    <property type="project" value="UniProtKB-KW"/>
</dbReference>
<dbReference type="GO" id="GO:0003677">
    <property type="term" value="F:DNA binding"/>
    <property type="evidence" value="ECO:0007669"/>
    <property type="project" value="UniProtKB-UniRule"/>
</dbReference>
<dbReference type="GO" id="GO:0003899">
    <property type="term" value="F:DNA-directed RNA polymerase activity"/>
    <property type="evidence" value="ECO:0007669"/>
    <property type="project" value="UniProtKB-UniRule"/>
</dbReference>
<dbReference type="GO" id="GO:0032549">
    <property type="term" value="F:ribonucleoside binding"/>
    <property type="evidence" value="ECO:0007669"/>
    <property type="project" value="InterPro"/>
</dbReference>
<dbReference type="GO" id="GO:0006351">
    <property type="term" value="P:DNA-templated transcription"/>
    <property type="evidence" value="ECO:0007669"/>
    <property type="project" value="UniProtKB-UniRule"/>
</dbReference>
<dbReference type="CDD" id="cd00653">
    <property type="entry name" value="RNA_pol_B_RPB2"/>
    <property type="match status" value="1"/>
</dbReference>
<dbReference type="FunFam" id="2.40.50.100:FF:000006">
    <property type="entry name" value="DNA-directed RNA polymerase subunit beta"/>
    <property type="match status" value="1"/>
</dbReference>
<dbReference type="FunFam" id="2.40.50.150:FF:000001">
    <property type="entry name" value="DNA-directed RNA polymerase subunit beta"/>
    <property type="match status" value="1"/>
</dbReference>
<dbReference type="FunFam" id="3.90.1110.10:FF:000001">
    <property type="entry name" value="DNA-directed RNA polymerase subunit beta"/>
    <property type="match status" value="1"/>
</dbReference>
<dbReference type="FunFam" id="3.90.1800.10:FF:000001">
    <property type="entry name" value="DNA-directed RNA polymerase subunit beta"/>
    <property type="match status" value="1"/>
</dbReference>
<dbReference type="Gene3D" id="2.40.50.100">
    <property type="match status" value="1"/>
</dbReference>
<dbReference type="Gene3D" id="2.40.50.150">
    <property type="match status" value="1"/>
</dbReference>
<dbReference type="Gene3D" id="3.90.1100.10">
    <property type="match status" value="2"/>
</dbReference>
<dbReference type="Gene3D" id="2.30.150.10">
    <property type="entry name" value="DNA-directed RNA polymerase, beta subunit, external 1 domain"/>
    <property type="match status" value="1"/>
</dbReference>
<dbReference type="Gene3D" id="2.40.270.10">
    <property type="entry name" value="DNA-directed RNA polymerase, subunit 2, domain 6"/>
    <property type="match status" value="2"/>
</dbReference>
<dbReference type="Gene3D" id="3.90.1800.10">
    <property type="entry name" value="RNA polymerase alpha subunit dimerisation domain"/>
    <property type="match status" value="1"/>
</dbReference>
<dbReference type="Gene3D" id="3.90.1110.10">
    <property type="entry name" value="RNA polymerase Rpb2, domain 2"/>
    <property type="match status" value="2"/>
</dbReference>
<dbReference type="HAMAP" id="MF_01321">
    <property type="entry name" value="RNApol_bact_RpoB"/>
    <property type="match status" value="1"/>
</dbReference>
<dbReference type="InterPro" id="IPR042107">
    <property type="entry name" value="DNA-dir_RNA_pol_bsu_ext_1_sf"/>
</dbReference>
<dbReference type="InterPro" id="IPR019462">
    <property type="entry name" value="DNA-dir_RNA_pol_bsu_external_1"/>
</dbReference>
<dbReference type="InterPro" id="IPR015712">
    <property type="entry name" value="DNA-dir_RNA_pol_su2"/>
</dbReference>
<dbReference type="InterPro" id="IPR007120">
    <property type="entry name" value="DNA-dir_RNAP_su2_dom"/>
</dbReference>
<dbReference type="InterPro" id="IPR037033">
    <property type="entry name" value="DNA-dir_RNAP_su2_hyb_sf"/>
</dbReference>
<dbReference type="InterPro" id="IPR010243">
    <property type="entry name" value="RNA_pol_bsu_bac"/>
</dbReference>
<dbReference type="InterPro" id="IPR007121">
    <property type="entry name" value="RNA_pol_bsu_CS"/>
</dbReference>
<dbReference type="InterPro" id="IPR007644">
    <property type="entry name" value="RNA_pol_bsu_protrusion"/>
</dbReference>
<dbReference type="InterPro" id="IPR007642">
    <property type="entry name" value="RNA_pol_Rpb2_2"/>
</dbReference>
<dbReference type="InterPro" id="IPR037034">
    <property type="entry name" value="RNA_pol_Rpb2_2_sf"/>
</dbReference>
<dbReference type="InterPro" id="IPR007645">
    <property type="entry name" value="RNA_pol_Rpb2_3"/>
</dbReference>
<dbReference type="InterPro" id="IPR007641">
    <property type="entry name" value="RNA_pol_Rpb2_7"/>
</dbReference>
<dbReference type="InterPro" id="IPR014724">
    <property type="entry name" value="RNA_pol_RPB2_OB-fold"/>
</dbReference>
<dbReference type="NCBIfam" id="NF001616">
    <property type="entry name" value="PRK00405.1"/>
    <property type="match status" value="1"/>
</dbReference>
<dbReference type="NCBIfam" id="TIGR02013">
    <property type="entry name" value="rpoB"/>
    <property type="match status" value="1"/>
</dbReference>
<dbReference type="PANTHER" id="PTHR20856">
    <property type="entry name" value="DNA-DIRECTED RNA POLYMERASE I SUBUNIT 2"/>
    <property type="match status" value="1"/>
</dbReference>
<dbReference type="Pfam" id="PF04563">
    <property type="entry name" value="RNA_pol_Rpb2_1"/>
    <property type="match status" value="1"/>
</dbReference>
<dbReference type="Pfam" id="PF04561">
    <property type="entry name" value="RNA_pol_Rpb2_2"/>
    <property type="match status" value="2"/>
</dbReference>
<dbReference type="Pfam" id="PF04565">
    <property type="entry name" value="RNA_pol_Rpb2_3"/>
    <property type="match status" value="1"/>
</dbReference>
<dbReference type="Pfam" id="PF10385">
    <property type="entry name" value="RNA_pol_Rpb2_45"/>
    <property type="match status" value="1"/>
</dbReference>
<dbReference type="Pfam" id="PF00562">
    <property type="entry name" value="RNA_pol_Rpb2_6"/>
    <property type="match status" value="1"/>
</dbReference>
<dbReference type="Pfam" id="PF04560">
    <property type="entry name" value="RNA_pol_Rpb2_7"/>
    <property type="match status" value="1"/>
</dbReference>
<dbReference type="SUPFAM" id="SSF64484">
    <property type="entry name" value="beta and beta-prime subunits of DNA dependent RNA-polymerase"/>
    <property type="match status" value="1"/>
</dbReference>
<dbReference type="PROSITE" id="PS01166">
    <property type="entry name" value="RNA_POL_BETA"/>
    <property type="match status" value="1"/>
</dbReference>
<feature type="chain" id="PRO_0000224022" description="DNA-directed RNA polymerase subunit beta">
    <location>
        <begin position="1"/>
        <end position="1362"/>
    </location>
</feature>
<organism>
    <name type="scientific">Acinetobacter baylyi (strain ATCC 33305 / BD413 / ADP1)</name>
    <dbReference type="NCBI Taxonomy" id="62977"/>
    <lineage>
        <taxon>Bacteria</taxon>
        <taxon>Pseudomonadati</taxon>
        <taxon>Pseudomonadota</taxon>
        <taxon>Gammaproteobacteria</taxon>
        <taxon>Moraxellales</taxon>
        <taxon>Moraxellaceae</taxon>
        <taxon>Acinetobacter</taxon>
    </lineage>
</organism>
<reference key="1">
    <citation type="journal article" date="2004" name="Nucleic Acids Res.">
        <title>Unique features revealed by the genome sequence of Acinetobacter sp. ADP1, a versatile and naturally transformation competent bacterium.</title>
        <authorList>
            <person name="Barbe V."/>
            <person name="Vallenet D."/>
            <person name="Fonknechten N."/>
            <person name="Kreimeyer A."/>
            <person name="Oztas S."/>
            <person name="Labarre L."/>
            <person name="Cruveiller S."/>
            <person name="Robert C."/>
            <person name="Duprat S."/>
            <person name="Wincker P."/>
            <person name="Ornston L.N."/>
            <person name="Weissenbach J."/>
            <person name="Marliere P."/>
            <person name="Cohen G.N."/>
            <person name="Medigue C."/>
        </authorList>
    </citation>
    <scope>NUCLEOTIDE SEQUENCE [LARGE SCALE GENOMIC DNA]</scope>
    <source>
        <strain>ATCC 33305 / BD413 / ADP1</strain>
    </source>
</reference>
<accession>Q6FF90</accession>
<keyword id="KW-0240">DNA-directed RNA polymerase</keyword>
<keyword id="KW-0548">Nucleotidyltransferase</keyword>
<keyword id="KW-0804">Transcription</keyword>
<keyword id="KW-0808">Transferase</keyword>